<keyword id="KW-1185">Reference proteome</keyword>
<keyword id="KW-0687">Ribonucleoprotein</keyword>
<keyword id="KW-0689">Ribosomal protein</keyword>
<keyword id="KW-0694">RNA-binding</keyword>
<keyword id="KW-0699">rRNA-binding</keyword>
<keyword id="KW-0820">tRNA-binding</keyword>
<dbReference type="EMBL" id="CP001110">
    <property type="protein sequence ID" value="ACF42634.1"/>
    <property type="molecule type" value="Genomic_DNA"/>
</dbReference>
<dbReference type="RefSeq" id="WP_012507130.1">
    <property type="nucleotide sequence ID" value="NC_011060.1"/>
</dbReference>
<dbReference type="SMR" id="B4SBV9"/>
<dbReference type="STRING" id="324925.Ppha_0301"/>
<dbReference type="KEGG" id="pph:Ppha_0301"/>
<dbReference type="eggNOG" id="COG0094">
    <property type="taxonomic scope" value="Bacteria"/>
</dbReference>
<dbReference type="HOGENOM" id="CLU_061015_2_1_10"/>
<dbReference type="Proteomes" id="UP000002724">
    <property type="component" value="Chromosome"/>
</dbReference>
<dbReference type="GO" id="GO:1990904">
    <property type="term" value="C:ribonucleoprotein complex"/>
    <property type="evidence" value="ECO:0007669"/>
    <property type="project" value="UniProtKB-KW"/>
</dbReference>
<dbReference type="GO" id="GO:0005840">
    <property type="term" value="C:ribosome"/>
    <property type="evidence" value="ECO:0007669"/>
    <property type="project" value="UniProtKB-KW"/>
</dbReference>
<dbReference type="GO" id="GO:0019843">
    <property type="term" value="F:rRNA binding"/>
    <property type="evidence" value="ECO:0007669"/>
    <property type="project" value="UniProtKB-UniRule"/>
</dbReference>
<dbReference type="GO" id="GO:0003735">
    <property type="term" value="F:structural constituent of ribosome"/>
    <property type="evidence" value="ECO:0007669"/>
    <property type="project" value="InterPro"/>
</dbReference>
<dbReference type="GO" id="GO:0000049">
    <property type="term" value="F:tRNA binding"/>
    <property type="evidence" value="ECO:0007669"/>
    <property type="project" value="UniProtKB-UniRule"/>
</dbReference>
<dbReference type="GO" id="GO:0006412">
    <property type="term" value="P:translation"/>
    <property type="evidence" value="ECO:0007669"/>
    <property type="project" value="UniProtKB-UniRule"/>
</dbReference>
<dbReference type="FunFam" id="3.30.1440.10:FF:000001">
    <property type="entry name" value="50S ribosomal protein L5"/>
    <property type="match status" value="1"/>
</dbReference>
<dbReference type="Gene3D" id="3.30.1440.10">
    <property type="match status" value="1"/>
</dbReference>
<dbReference type="HAMAP" id="MF_01333_B">
    <property type="entry name" value="Ribosomal_uL5_B"/>
    <property type="match status" value="1"/>
</dbReference>
<dbReference type="InterPro" id="IPR002132">
    <property type="entry name" value="Ribosomal_uL5"/>
</dbReference>
<dbReference type="InterPro" id="IPR020930">
    <property type="entry name" value="Ribosomal_uL5_bac-type"/>
</dbReference>
<dbReference type="InterPro" id="IPR031309">
    <property type="entry name" value="Ribosomal_uL5_C"/>
</dbReference>
<dbReference type="InterPro" id="IPR022803">
    <property type="entry name" value="Ribosomal_uL5_dom_sf"/>
</dbReference>
<dbReference type="InterPro" id="IPR031310">
    <property type="entry name" value="Ribosomal_uL5_N"/>
</dbReference>
<dbReference type="NCBIfam" id="NF000585">
    <property type="entry name" value="PRK00010.1"/>
    <property type="match status" value="1"/>
</dbReference>
<dbReference type="PANTHER" id="PTHR11994">
    <property type="entry name" value="60S RIBOSOMAL PROTEIN L11-RELATED"/>
    <property type="match status" value="1"/>
</dbReference>
<dbReference type="Pfam" id="PF00281">
    <property type="entry name" value="Ribosomal_L5"/>
    <property type="match status" value="1"/>
</dbReference>
<dbReference type="Pfam" id="PF00673">
    <property type="entry name" value="Ribosomal_L5_C"/>
    <property type="match status" value="1"/>
</dbReference>
<dbReference type="PIRSF" id="PIRSF002161">
    <property type="entry name" value="Ribosomal_L5"/>
    <property type="match status" value="1"/>
</dbReference>
<dbReference type="SUPFAM" id="SSF55282">
    <property type="entry name" value="RL5-like"/>
    <property type="match status" value="1"/>
</dbReference>
<accession>B4SBV9</accession>
<feature type="chain" id="PRO_1000142428" description="Large ribosomal subunit protein uL5">
    <location>
        <begin position="1"/>
        <end position="195"/>
    </location>
</feature>
<protein>
    <recommendedName>
        <fullName evidence="1">Large ribosomal subunit protein uL5</fullName>
    </recommendedName>
    <alternativeName>
        <fullName evidence="2">50S ribosomal protein L5</fullName>
    </alternativeName>
</protein>
<organism>
    <name type="scientific">Pelodictyon phaeoclathratiforme (strain DSM 5477 / BU-1)</name>
    <dbReference type="NCBI Taxonomy" id="324925"/>
    <lineage>
        <taxon>Bacteria</taxon>
        <taxon>Pseudomonadati</taxon>
        <taxon>Chlorobiota</taxon>
        <taxon>Chlorobiia</taxon>
        <taxon>Chlorobiales</taxon>
        <taxon>Chlorobiaceae</taxon>
        <taxon>Chlorobium/Pelodictyon group</taxon>
        <taxon>Pelodictyon</taxon>
    </lineage>
</organism>
<gene>
    <name evidence="1" type="primary">rplE</name>
    <name type="ordered locus">Ppha_0301</name>
</gene>
<comment type="function">
    <text evidence="1">This is one of the proteins that bind and probably mediate the attachment of the 5S RNA into the large ribosomal subunit, where it forms part of the central protuberance. In the 70S ribosome it contacts protein S13 of the 30S subunit (bridge B1b), connecting the 2 subunits; this bridge is implicated in subunit movement. Contacts the P site tRNA; the 5S rRNA and some of its associated proteins might help stabilize positioning of ribosome-bound tRNAs.</text>
</comment>
<comment type="subunit">
    <text evidence="1">Part of the 50S ribosomal subunit; part of the 5S rRNA/L5/L18/L25 subcomplex. Contacts the 5S rRNA and the P site tRNA. Forms a bridge to the 30S subunit in the 70S ribosome.</text>
</comment>
<comment type="similarity">
    <text evidence="1">Belongs to the universal ribosomal protein uL5 family.</text>
</comment>
<proteinExistence type="inferred from homology"/>
<sequence length="195" mass="22051">MDKNKEMTPTTPSLARLETFFKEKVTPNLVERFQYKNAMLVPKLKKISINIGVGAAAAEPKLLEIALQELAQITGQKPQIRKSKKAISNFKLREGQAIGCRVTLRRKAMYEFFDRFVSLAVPRIRDFRGLSDTSFDGRGNYTVGVREQIIFPEIDIDKVPRISGMDISFVTSASTDEEAYVLLSELGMPFKKKNN</sequence>
<reference key="1">
    <citation type="submission" date="2008-06" db="EMBL/GenBank/DDBJ databases">
        <title>Complete sequence of Pelodictyon phaeoclathratiforme BU-1.</title>
        <authorList>
            <consortium name="US DOE Joint Genome Institute"/>
            <person name="Lucas S."/>
            <person name="Copeland A."/>
            <person name="Lapidus A."/>
            <person name="Glavina del Rio T."/>
            <person name="Dalin E."/>
            <person name="Tice H."/>
            <person name="Bruce D."/>
            <person name="Goodwin L."/>
            <person name="Pitluck S."/>
            <person name="Schmutz J."/>
            <person name="Larimer F."/>
            <person name="Land M."/>
            <person name="Hauser L."/>
            <person name="Kyrpides N."/>
            <person name="Mikhailova N."/>
            <person name="Liu Z."/>
            <person name="Li T."/>
            <person name="Zhao F."/>
            <person name="Overmann J."/>
            <person name="Bryant D.A."/>
            <person name="Richardson P."/>
        </authorList>
    </citation>
    <scope>NUCLEOTIDE SEQUENCE [LARGE SCALE GENOMIC DNA]</scope>
    <source>
        <strain>DSM 5477 / BU-1</strain>
    </source>
</reference>
<evidence type="ECO:0000255" key="1">
    <source>
        <dbReference type="HAMAP-Rule" id="MF_01333"/>
    </source>
</evidence>
<evidence type="ECO:0000305" key="2"/>
<name>RL5_PELPB</name>